<protein>
    <recommendedName>
        <fullName evidence="1">Proline--tRNA ligase</fullName>
        <ecNumber evidence="1">6.1.1.15</ecNumber>
    </recommendedName>
    <alternativeName>
        <fullName evidence="1">Prolyl-tRNA synthetase</fullName>
        <shortName evidence="1">ProRS</shortName>
    </alternativeName>
</protein>
<feature type="chain" id="PRO_1000215570" description="Proline--tRNA ligase">
    <location>
        <begin position="1"/>
        <end position="474"/>
    </location>
</feature>
<sequence>MKSIKRVEKVTSHLSDFGQWYTDICLKAELIAYSDVKGFIIYLPYGYALWENIQKYLNYEFQKTGHQNVYFPLVFSEKLFQKEKDHIQGFSPEAAMITSTGQKELFEKLVIRPTSEVLFSQYYAKIISSYRDLPKLYNQFCNVVRWEKATKPFLRGKEFLWQEGHTVHATEKEALDQTLFAIQLYEKLGKELLALPFVCGRKTEKEKFAGALITYSIEALMQDGQALQAGTSHYLGTNFAQSFQIQFQDQDHQNKYVHQTSWGVSTRLIGALIMVHSDDEGLILPPYIAPIQIVIIPLQPKNELVQAEAKKIFDDLKTTYRVHLDLQNKTPGWKFSQYELKGVPLRIEIGARDLAQGEVTIFQRYNNSKNNFSKNTFKAEIPKLLKTIHDKMYQKAQKHLEANRRQASTYQEFKDHLQKKGYVAMSISGMDAEIKIKTETGATARVILETPLITPNCPVTDKKAIQTVLFAKSY</sequence>
<gene>
    <name evidence="1" type="primary">proS</name>
    <name type="ordered locus">PA0678</name>
</gene>
<keyword id="KW-0030">Aminoacyl-tRNA synthetase</keyword>
<keyword id="KW-0067">ATP-binding</keyword>
<keyword id="KW-0963">Cytoplasm</keyword>
<keyword id="KW-0436">Ligase</keyword>
<keyword id="KW-0547">Nucleotide-binding</keyword>
<keyword id="KW-0648">Protein biosynthesis</keyword>
<keyword id="KW-1185">Reference proteome</keyword>
<dbReference type="EC" id="6.1.1.15" evidence="1"/>
<dbReference type="EMBL" id="AM422018">
    <property type="protein sequence ID" value="CAM12012.1"/>
    <property type="molecule type" value="Genomic_DNA"/>
</dbReference>
<dbReference type="SMR" id="B1VAN9"/>
<dbReference type="STRING" id="59748.PA0678"/>
<dbReference type="KEGG" id="pal:PA0678"/>
<dbReference type="eggNOG" id="COG0441">
    <property type="taxonomic scope" value="Bacteria"/>
</dbReference>
<dbReference type="Proteomes" id="UP000008323">
    <property type="component" value="Chromosome"/>
</dbReference>
<dbReference type="GO" id="GO:0017101">
    <property type="term" value="C:aminoacyl-tRNA synthetase multienzyme complex"/>
    <property type="evidence" value="ECO:0007669"/>
    <property type="project" value="TreeGrafter"/>
</dbReference>
<dbReference type="GO" id="GO:0005737">
    <property type="term" value="C:cytoplasm"/>
    <property type="evidence" value="ECO:0007669"/>
    <property type="project" value="UniProtKB-SubCell"/>
</dbReference>
<dbReference type="GO" id="GO:0005524">
    <property type="term" value="F:ATP binding"/>
    <property type="evidence" value="ECO:0007669"/>
    <property type="project" value="UniProtKB-UniRule"/>
</dbReference>
<dbReference type="GO" id="GO:0004827">
    <property type="term" value="F:proline-tRNA ligase activity"/>
    <property type="evidence" value="ECO:0007669"/>
    <property type="project" value="UniProtKB-UniRule"/>
</dbReference>
<dbReference type="GO" id="GO:0006433">
    <property type="term" value="P:prolyl-tRNA aminoacylation"/>
    <property type="evidence" value="ECO:0007669"/>
    <property type="project" value="UniProtKB-UniRule"/>
</dbReference>
<dbReference type="CDD" id="cd00778">
    <property type="entry name" value="ProRS_core_arch_euk"/>
    <property type="match status" value="1"/>
</dbReference>
<dbReference type="FunFam" id="3.30.930.10:FF:000037">
    <property type="entry name" value="Proline--tRNA ligase"/>
    <property type="match status" value="1"/>
</dbReference>
<dbReference type="Gene3D" id="3.40.50.800">
    <property type="entry name" value="Anticodon-binding domain"/>
    <property type="match status" value="1"/>
</dbReference>
<dbReference type="Gene3D" id="3.30.930.10">
    <property type="entry name" value="Bira Bifunctional Protein, Domain 2"/>
    <property type="match status" value="1"/>
</dbReference>
<dbReference type="Gene3D" id="3.30.110.30">
    <property type="entry name" value="C-terminal domain of ProRS"/>
    <property type="match status" value="1"/>
</dbReference>
<dbReference type="HAMAP" id="MF_01571">
    <property type="entry name" value="Pro_tRNA_synth_type3"/>
    <property type="match status" value="1"/>
</dbReference>
<dbReference type="InterPro" id="IPR002314">
    <property type="entry name" value="aa-tRNA-synt_IIb"/>
</dbReference>
<dbReference type="InterPro" id="IPR006195">
    <property type="entry name" value="aa-tRNA-synth_II"/>
</dbReference>
<dbReference type="InterPro" id="IPR045864">
    <property type="entry name" value="aa-tRNA-synth_II/BPL/LPL"/>
</dbReference>
<dbReference type="InterPro" id="IPR004154">
    <property type="entry name" value="Anticodon-bd"/>
</dbReference>
<dbReference type="InterPro" id="IPR036621">
    <property type="entry name" value="Anticodon-bd_dom_sf"/>
</dbReference>
<dbReference type="InterPro" id="IPR002316">
    <property type="entry name" value="Pro-tRNA-ligase_IIa"/>
</dbReference>
<dbReference type="InterPro" id="IPR004499">
    <property type="entry name" value="Pro-tRNA-ligase_IIa_arc-type"/>
</dbReference>
<dbReference type="InterPro" id="IPR016061">
    <property type="entry name" value="Pro-tRNA_ligase_II_C"/>
</dbReference>
<dbReference type="InterPro" id="IPR017449">
    <property type="entry name" value="Pro-tRNA_synth_II"/>
</dbReference>
<dbReference type="InterPro" id="IPR033721">
    <property type="entry name" value="ProRS_core_arch_euk"/>
</dbReference>
<dbReference type="NCBIfam" id="TIGR00408">
    <property type="entry name" value="proS_fam_I"/>
    <property type="match status" value="1"/>
</dbReference>
<dbReference type="PANTHER" id="PTHR43382:SF2">
    <property type="entry name" value="BIFUNCTIONAL GLUTAMATE_PROLINE--TRNA LIGASE"/>
    <property type="match status" value="1"/>
</dbReference>
<dbReference type="PANTHER" id="PTHR43382">
    <property type="entry name" value="PROLYL-TRNA SYNTHETASE"/>
    <property type="match status" value="1"/>
</dbReference>
<dbReference type="Pfam" id="PF03129">
    <property type="entry name" value="HGTP_anticodon"/>
    <property type="match status" value="1"/>
</dbReference>
<dbReference type="Pfam" id="PF09180">
    <property type="entry name" value="ProRS-C_1"/>
    <property type="match status" value="1"/>
</dbReference>
<dbReference type="Pfam" id="PF00587">
    <property type="entry name" value="tRNA-synt_2b"/>
    <property type="match status" value="1"/>
</dbReference>
<dbReference type="PRINTS" id="PR01046">
    <property type="entry name" value="TRNASYNTHPRO"/>
</dbReference>
<dbReference type="SMART" id="SM00946">
    <property type="entry name" value="ProRS-C_1"/>
    <property type="match status" value="1"/>
</dbReference>
<dbReference type="SUPFAM" id="SSF64586">
    <property type="entry name" value="C-terminal domain of ProRS"/>
    <property type="match status" value="1"/>
</dbReference>
<dbReference type="SUPFAM" id="SSF52954">
    <property type="entry name" value="Class II aaRS ABD-related"/>
    <property type="match status" value="1"/>
</dbReference>
<dbReference type="SUPFAM" id="SSF55681">
    <property type="entry name" value="Class II aaRS and biotin synthetases"/>
    <property type="match status" value="1"/>
</dbReference>
<dbReference type="PROSITE" id="PS50862">
    <property type="entry name" value="AA_TRNA_LIGASE_II"/>
    <property type="match status" value="1"/>
</dbReference>
<name>SYP_PHYAS</name>
<comment type="function">
    <text evidence="1">Catalyzes the attachment of proline to tRNA(Pro) in a two-step reaction: proline is first activated by ATP to form Pro-AMP and then transferred to the acceptor end of tRNA(Pro).</text>
</comment>
<comment type="catalytic activity">
    <reaction evidence="1">
        <text>tRNA(Pro) + L-proline + ATP = L-prolyl-tRNA(Pro) + AMP + diphosphate</text>
        <dbReference type="Rhea" id="RHEA:14305"/>
        <dbReference type="Rhea" id="RHEA-COMP:9700"/>
        <dbReference type="Rhea" id="RHEA-COMP:9702"/>
        <dbReference type="ChEBI" id="CHEBI:30616"/>
        <dbReference type="ChEBI" id="CHEBI:33019"/>
        <dbReference type="ChEBI" id="CHEBI:60039"/>
        <dbReference type="ChEBI" id="CHEBI:78442"/>
        <dbReference type="ChEBI" id="CHEBI:78532"/>
        <dbReference type="ChEBI" id="CHEBI:456215"/>
        <dbReference type="EC" id="6.1.1.15"/>
    </reaction>
</comment>
<comment type="subunit">
    <text evidence="1">Homodimer.</text>
</comment>
<comment type="subcellular location">
    <subcellularLocation>
        <location evidence="1">Cytoplasm</location>
    </subcellularLocation>
</comment>
<comment type="domain">
    <text evidence="1">Consists of three domains: the N-terminal catalytic domain, the anticodon-binding domain and the C-terminal extension.</text>
</comment>
<comment type="similarity">
    <text evidence="1">Belongs to the class-II aminoacyl-tRNA synthetase family. ProS type 3 subfamily.</text>
</comment>
<accession>B1VAN9</accession>
<evidence type="ECO:0000255" key="1">
    <source>
        <dbReference type="HAMAP-Rule" id="MF_01571"/>
    </source>
</evidence>
<organism>
    <name type="scientific">Phytoplasma australiense</name>
    <dbReference type="NCBI Taxonomy" id="59748"/>
    <lineage>
        <taxon>Bacteria</taxon>
        <taxon>Bacillati</taxon>
        <taxon>Mycoplasmatota</taxon>
        <taxon>Mollicutes</taxon>
        <taxon>Acholeplasmatales</taxon>
        <taxon>Acholeplasmataceae</taxon>
        <taxon>Candidatus Phytoplasma</taxon>
        <taxon>16SrXII (Stolbur group)</taxon>
    </lineage>
</organism>
<proteinExistence type="inferred from homology"/>
<reference key="1">
    <citation type="journal article" date="2008" name="J. Bacteriol.">
        <title>Comparative genome analysis of 'Candidatus Phytoplasma australiense' (subgroup tuf-Australia I; rp-A) and 'Ca. Phytoplasma asteris' strains OY-M and AY-WB.</title>
        <authorList>
            <person name="Tran-Nguyen L.T."/>
            <person name="Kube M."/>
            <person name="Schneider B."/>
            <person name="Reinhardt R."/>
            <person name="Gibb K.S."/>
        </authorList>
    </citation>
    <scope>NUCLEOTIDE SEQUENCE [LARGE SCALE GENOMIC DNA]</scope>
</reference>